<reference key="1">
    <citation type="journal article" date="2001" name="Nature">
        <title>Complete genome sequence of Salmonella enterica serovar Typhimurium LT2.</title>
        <authorList>
            <person name="McClelland M."/>
            <person name="Sanderson K.E."/>
            <person name="Spieth J."/>
            <person name="Clifton S.W."/>
            <person name="Latreille P."/>
            <person name="Courtney L."/>
            <person name="Porwollik S."/>
            <person name="Ali J."/>
            <person name="Dante M."/>
            <person name="Du F."/>
            <person name="Hou S."/>
            <person name="Layman D."/>
            <person name="Leonard S."/>
            <person name="Nguyen C."/>
            <person name="Scott K."/>
            <person name="Holmes A."/>
            <person name="Grewal N."/>
            <person name="Mulvaney E."/>
            <person name="Ryan E."/>
            <person name="Sun H."/>
            <person name="Florea L."/>
            <person name="Miller W."/>
            <person name="Stoneking T."/>
            <person name="Nhan M."/>
            <person name="Waterston R."/>
            <person name="Wilson R.K."/>
        </authorList>
    </citation>
    <scope>NUCLEOTIDE SEQUENCE [LARGE SCALE GENOMIC DNA]</scope>
    <source>
        <strain>LT2 / SGSC1412 / ATCC 700720</strain>
    </source>
</reference>
<organism>
    <name type="scientific">Salmonella typhimurium (strain LT2 / SGSC1412 / ATCC 700720)</name>
    <dbReference type="NCBI Taxonomy" id="99287"/>
    <lineage>
        <taxon>Bacteria</taxon>
        <taxon>Pseudomonadati</taxon>
        <taxon>Pseudomonadota</taxon>
        <taxon>Gammaproteobacteria</taxon>
        <taxon>Enterobacterales</taxon>
        <taxon>Enterobacteriaceae</taxon>
        <taxon>Salmonella</taxon>
    </lineage>
</organism>
<evidence type="ECO:0000255" key="1">
    <source>
        <dbReference type="HAMAP-Rule" id="MF_01004"/>
    </source>
</evidence>
<accession>Q8ZPS8</accession>
<feature type="chain" id="PRO_0000059977" description="Vitamin B12 import system permease protein BtuC">
    <location>
        <begin position="1"/>
        <end position="326"/>
    </location>
</feature>
<feature type="transmembrane region" description="Helical" evidence="1">
    <location>
        <begin position="17"/>
        <end position="39"/>
    </location>
</feature>
<feature type="transmembrane region" description="Helical" evidence="1">
    <location>
        <begin position="59"/>
        <end position="81"/>
    </location>
</feature>
<feature type="transmembrane region" description="Helical" evidence="1">
    <location>
        <begin position="88"/>
        <end position="107"/>
    </location>
</feature>
<feature type="transmembrane region" description="Helical" evidence="1">
    <location>
        <begin position="111"/>
        <end position="133"/>
    </location>
</feature>
<feature type="transmembrane region" description="Helical" evidence="1">
    <location>
        <begin position="146"/>
        <end position="168"/>
    </location>
</feature>
<feature type="transmembrane region" description="Helical" evidence="1">
    <location>
        <begin position="188"/>
        <end position="205"/>
    </location>
</feature>
<feature type="transmembrane region" description="Helical" evidence="1">
    <location>
        <begin position="242"/>
        <end position="264"/>
    </location>
</feature>
<feature type="transmembrane region" description="Helical" evidence="1">
    <location>
        <begin position="274"/>
        <end position="296"/>
    </location>
</feature>
<feature type="transmembrane region" description="Helical" evidence="1">
    <location>
        <begin position="303"/>
        <end position="322"/>
    </location>
</feature>
<name>BTUC_SALTY</name>
<proteinExistence type="inferred from homology"/>
<gene>
    <name evidence="1" type="primary">btuC</name>
    <name type="ordered locus">STM1340</name>
</gene>
<comment type="function">
    <text evidence="1">Part of the ABC transporter complex BtuCDF involved in vitamin B12 import. Involved in the translocation of the substrate across the membrane.</text>
</comment>
<comment type="subunit">
    <text evidence="1">The complex is composed of two ATP-binding proteins (BtuD), two transmembrane proteins (BtuC) and a solute-binding protein (BtuF).</text>
</comment>
<comment type="subcellular location">
    <subcellularLocation>
        <location evidence="1">Cell inner membrane</location>
        <topology evidence="1">Multi-pass membrane protein</topology>
    </subcellularLocation>
</comment>
<comment type="similarity">
    <text evidence="1">Belongs to the binding-protein-dependent transport system permease family. FecCD subfamily.</text>
</comment>
<protein>
    <recommendedName>
        <fullName evidence="1">Vitamin B12 import system permease protein BtuC</fullName>
    </recommendedName>
</protein>
<sequence>MLTFARQQQRRNVRWLLSLSLLVLLATLLSLCAGEQWIAPGDWLSARGELFVWQIRLPRTLAVLLVGAALALSGAVMQALFENPLAEPGLLGVSNGAGVGLIAAVLLGQGQLPGWALGLCAIAGALIITLILLRFARRHLSTSRLLLAGVALGIICSALMTWAIYFSTSFDLRQLMYWMMGGFGGVDWQQSWLMIALIPVLIWICCQSQPLNMLALGETSARQLGLPLWFWRNLLVVATGWMVGVSVAMAGAIGFIGLVIPHILRLCGLTDHRVLLPGCALAGAIALLLADVVARLALASAELPIGVVTATLGAPVFIWLLLKSAR</sequence>
<dbReference type="EMBL" id="AE006468">
    <property type="protein sequence ID" value="AAL20265.1"/>
    <property type="molecule type" value="Genomic_DNA"/>
</dbReference>
<dbReference type="RefSeq" id="NP_460306.1">
    <property type="nucleotide sequence ID" value="NC_003197.2"/>
</dbReference>
<dbReference type="RefSeq" id="WP_000954984.1">
    <property type="nucleotide sequence ID" value="NC_003197.2"/>
</dbReference>
<dbReference type="SMR" id="Q8ZPS8"/>
<dbReference type="STRING" id="99287.STM1340"/>
<dbReference type="PaxDb" id="99287-STM1340"/>
<dbReference type="GeneID" id="1252858"/>
<dbReference type="KEGG" id="stm:STM1340"/>
<dbReference type="PATRIC" id="fig|99287.12.peg.1423"/>
<dbReference type="HOGENOM" id="CLU_013016_0_3_6"/>
<dbReference type="OMA" id="SVAMRGW"/>
<dbReference type="PhylomeDB" id="Q8ZPS8"/>
<dbReference type="BioCyc" id="SENT99287:STM1340-MONOMER"/>
<dbReference type="Proteomes" id="UP000001014">
    <property type="component" value="Chromosome"/>
</dbReference>
<dbReference type="GO" id="GO:0005886">
    <property type="term" value="C:plasma membrane"/>
    <property type="evidence" value="ECO:0000318"/>
    <property type="project" value="GO_Central"/>
</dbReference>
<dbReference type="GO" id="GO:0022857">
    <property type="term" value="F:transmembrane transporter activity"/>
    <property type="evidence" value="ECO:0000318"/>
    <property type="project" value="GO_Central"/>
</dbReference>
<dbReference type="GO" id="GO:0090482">
    <property type="term" value="F:vitamin transmembrane transporter activity"/>
    <property type="evidence" value="ECO:0007669"/>
    <property type="project" value="UniProtKB-UniRule"/>
</dbReference>
<dbReference type="GO" id="GO:0015889">
    <property type="term" value="P:cobalamin transport"/>
    <property type="evidence" value="ECO:0000318"/>
    <property type="project" value="GO_Central"/>
</dbReference>
<dbReference type="CDD" id="cd06550">
    <property type="entry name" value="TM_ABC_iron-siderophores_like"/>
    <property type="match status" value="1"/>
</dbReference>
<dbReference type="FunFam" id="1.10.3470.10:FF:000001">
    <property type="entry name" value="Vitamin B12 ABC transporter permease BtuC"/>
    <property type="match status" value="1"/>
</dbReference>
<dbReference type="Gene3D" id="1.10.3470.10">
    <property type="entry name" value="ABC transporter involved in vitamin B12 uptake, BtuC"/>
    <property type="match status" value="1"/>
</dbReference>
<dbReference type="HAMAP" id="MF_01004">
    <property type="entry name" value="BtuC"/>
    <property type="match status" value="1"/>
</dbReference>
<dbReference type="InterPro" id="IPR037294">
    <property type="entry name" value="ABC_BtuC-like"/>
</dbReference>
<dbReference type="InterPro" id="IPR023691">
    <property type="entry name" value="ABC_transptr_BtuC"/>
</dbReference>
<dbReference type="InterPro" id="IPR000522">
    <property type="entry name" value="ABC_transptr_permease_BtuC"/>
</dbReference>
<dbReference type="NCBIfam" id="NF003001">
    <property type="entry name" value="PRK03784.1"/>
    <property type="match status" value="1"/>
</dbReference>
<dbReference type="PANTHER" id="PTHR30472">
    <property type="entry name" value="FERRIC ENTEROBACTIN TRANSPORT SYSTEM PERMEASE PROTEIN"/>
    <property type="match status" value="1"/>
</dbReference>
<dbReference type="PANTHER" id="PTHR30472:SF29">
    <property type="entry name" value="VITAMIN B12 IMPORT SYSTEM PERMEASE PROTEIN BTUC"/>
    <property type="match status" value="1"/>
</dbReference>
<dbReference type="Pfam" id="PF01032">
    <property type="entry name" value="FecCD"/>
    <property type="match status" value="1"/>
</dbReference>
<dbReference type="SUPFAM" id="SSF81345">
    <property type="entry name" value="ABC transporter involved in vitamin B12 uptake, BtuC"/>
    <property type="match status" value="1"/>
</dbReference>
<keyword id="KW-0997">Cell inner membrane</keyword>
<keyword id="KW-1003">Cell membrane</keyword>
<keyword id="KW-0472">Membrane</keyword>
<keyword id="KW-1185">Reference proteome</keyword>
<keyword id="KW-0812">Transmembrane</keyword>
<keyword id="KW-1133">Transmembrane helix</keyword>
<keyword id="KW-0813">Transport</keyword>